<reference key="1">
    <citation type="journal article" date="2002" name="EMBO J.">
        <title>Protein import into chloroplasts involves redox-regulated proteins.</title>
        <authorList>
            <person name="Kuechler M."/>
            <person name="Decker S."/>
            <person name="Hoermann F."/>
            <person name="Soll J."/>
            <person name="Heins L."/>
        </authorList>
    </citation>
    <scope>NUCLEOTIDE SEQUENCE [MRNA]</scope>
    <scope>PROTEIN SEQUENCE OF 385-394 AND 500-507</scope>
    <scope>FUNCTION</scope>
    <scope>SUBCELLULAR LOCATION</scope>
    <scope>INTERACTION WITH TIC40; TIC55; TIC110 AND PETH/FNR</scope>
</reference>
<reference key="2">
    <citation type="journal article" date="2006" name="Proc. Natl. Acad. Sci. U.S.A.">
        <title>Calcium regulation of chloroplast protein translocation is mediated by calmodulin binding to Tic32.</title>
        <authorList>
            <person name="Chigri F."/>
            <person name="Hoermann F."/>
            <person name="Stamp A."/>
            <person name="Stammers D.K."/>
            <person name="Boelter B."/>
            <person name="Soll J."/>
            <person name="Vothknecht U.C."/>
        </authorList>
    </citation>
    <scope>INTERACTION WITH TIC110</scope>
</reference>
<reference key="3">
    <citation type="journal article" date="2008" name="J. Biol. Chem.">
        <title>TIC62 redox-regulated translocon composition and dynamics.</title>
        <authorList>
            <person name="Stengel A."/>
            <person name="Benz P."/>
            <person name="Balsera M."/>
            <person name="Soll J."/>
            <person name="Boelter B."/>
        </authorList>
    </citation>
    <scope>FUNCTION</scope>
    <scope>SUBCELLULAR LOCATION</scope>
    <scope>INTERACTION WITH TIC110 AND PETH/FNR</scope>
</reference>
<reference key="4">
    <citation type="journal article" date="2010" name="Biochim. Biophys. Acta">
        <title>Protein import into chloroplasts: the Tic complex and its regulation.</title>
        <authorList>
            <person name="Kovacs-Bogdan E."/>
            <person name="Soll J."/>
            <person name="Bolter B."/>
        </authorList>
    </citation>
    <scope>REVIEW</scope>
</reference>
<reference key="5">
    <citation type="journal article" date="2010" name="Proc. Natl. Acad. Sci. U.S.A.">
        <title>Ferredoxin:NADPH oxidoreductase is recruited to thylakoids by binding to a polyproline type II helix in a pH-dependent manner.</title>
        <authorList>
            <person name="Alte F."/>
            <person name="Stengel A."/>
            <person name="Benz J.P."/>
            <person name="Petersen E."/>
            <person name="Soll J."/>
            <person name="Groll M."/>
            <person name="Bolter B."/>
        </authorList>
    </citation>
    <scope>X-RAY CRYSTALLOGRAPHY (1.70 ANGSTROMS) OF 383-408 IN COMPLEX WITH PETH/FNR</scope>
</reference>
<keyword id="KW-0002">3D-structure</keyword>
<keyword id="KW-0150">Chloroplast</keyword>
<keyword id="KW-0903">Direct protein sequencing</keyword>
<keyword id="KW-0472">Membrane</keyword>
<keyword id="KW-0934">Plastid</keyword>
<keyword id="KW-1001">Plastid inner membrane</keyword>
<keyword id="KW-0653">Protein transport</keyword>
<keyword id="KW-0677">Repeat</keyword>
<keyword id="KW-0809">Transit peptide</keyword>
<keyword id="KW-0813">Transport</keyword>
<dbReference type="EMBL" id="AJ344551">
    <property type="protein sequence ID" value="CAC87810.2"/>
    <property type="molecule type" value="mRNA"/>
</dbReference>
<dbReference type="PDB" id="3MHP">
    <property type="method" value="X-ray"/>
    <property type="resolution" value="1.70 A"/>
    <property type="chains" value="C=383-408"/>
</dbReference>
<dbReference type="PDBsum" id="3MHP"/>
<dbReference type="SMR" id="Q8SKU2"/>
<dbReference type="DIP" id="DIP-59467N"/>
<dbReference type="IntAct" id="Q8SKU2">
    <property type="interactions" value="2"/>
</dbReference>
<dbReference type="TCDB" id="3.A.9.1.1">
    <property type="family name" value="the chloroplast envelope protein translocase (cept or tic-toc) family"/>
</dbReference>
<dbReference type="GO" id="GO:0009706">
    <property type="term" value="C:chloroplast inner membrane"/>
    <property type="evidence" value="ECO:0007669"/>
    <property type="project" value="UniProtKB-SubCell"/>
</dbReference>
<dbReference type="GO" id="GO:0009570">
    <property type="term" value="C:chloroplast stroma"/>
    <property type="evidence" value="ECO:0007669"/>
    <property type="project" value="UniProtKB-SubCell"/>
</dbReference>
<dbReference type="GO" id="GO:0015031">
    <property type="term" value="P:protein transport"/>
    <property type="evidence" value="ECO:0007669"/>
    <property type="project" value="UniProtKB-KW"/>
</dbReference>
<dbReference type="CDD" id="cd05243">
    <property type="entry name" value="SDR_a5"/>
    <property type="match status" value="1"/>
</dbReference>
<dbReference type="FunFam" id="3.40.50.720:FF:000499">
    <property type="entry name" value="Protein TIC 62, chloroplastic"/>
    <property type="match status" value="1"/>
</dbReference>
<dbReference type="Gene3D" id="3.40.50.720">
    <property type="entry name" value="NAD(P)-binding Rossmann-like Domain"/>
    <property type="match status" value="1"/>
</dbReference>
<dbReference type="InterPro" id="IPR016040">
    <property type="entry name" value="NAD(P)-bd_dom"/>
</dbReference>
<dbReference type="InterPro" id="IPR036291">
    <property type="entry name" value="NAD(P)-bd_dom_sf"/>
</dbReference>
<dbReference type="InterPro" id="IPR044719">
    <property type="entry name" value="TIC62"/>
</dbReference>
<dbReference type="PANTHER" id="PTHR47285">
    <property type="entry name" value="PROTEIN TIC 62, CHLOROPLASTIC"/>
    <property type="match status" value="1"/>
</dbReference>
<dbReference type="PANTHER" id="PTHR47285:SF1">
    <property type="entry name" value="PROTEIN TIC 62, CHLOROPLASTIC"/>
    <property type="match status" value="1"/>
</dbReference>
<dbReference type="Pfam" id="PF13460">
    <property type="entry name" value="NAD_binding_10"/>
    <property type="match status" value="1"/>
</dbReference>
<dbReference type="SUPFAM" id="SSF51735">
    <property type="entry name" value="NAD(P)-binding Rossmann-fold domains"/>
    <property type="match status" value="1"/>
</dbReference>
<organism>
    <name type="scientific">Pisum sativum</name>
    <name type="common">Garden pea</name>
    <name type="synonym">Lathyrus oleraceus</name>
    <dbReference type="NCBI Taxonomy" id="3888"/>
    <lineage>
        <taxon>Eukaryota</taxon>
        <taxon>Viridiplantae</taxon>
        <taxon>Streptophyta</taxon>
        <taxon>Embryophyta</taxon>
        <taxon>Tracheophyta</taxon>
        <taxon>Spermatophyta</taxon>
        <taxon>Magnoliopsida</taxon>
        <taxon>eudicotyledons</taxon>
        <taxon>Gunneridae</taxon>
        <taxon>Pentapetalae</taxon>
        <taxon>rosids</taxon>
        <taxon>fabids</taxon>
        <taxon>Fabales</taxon>
        <taxon>Fabaceae</taxon>
        <taxon>Papilionoideae</taxon>
        <taxon>50 kb inversion clade</taxon>
        <taxon>NPAAA clade</taxon>
        <taxon>Hologalegina</taxon>
        <taxon>IRL clade</taxon>
        <taxon>Fabeae</taxon>
        <taxon>Pisum</taxon>
    </lineage>
</organism>
<evidence type="ECO:0000255" key="1"/>
<evidence type="ECO:0000256" key="2">
    <source>
        <dbReference type="SAM" id="MobiDB-lite"/>
    </source>
</evidence>
<evidence type="ECO:0000269" key="3">
    <source>
    </source>
</evidence>
<evidence type="ECO:0000269" key="4">
    <source>
    </source>
</evidence>
<evidence type="ECO:0000269" key="5">
    <source>
    </source>
</evidence>
<evidence type="ECO:0000269" key="6">
    <source>
    </source>
</evidence>
<evidence type="ECO:0000305" key="7"/>
<evidence type="ECO:0007829" key="8">
    <source>
        <dbReference type="PDB" id="3MHP"/>
    </source>
</evidence>
<protein>
    <recommendedName>
        <fullName>Protein TIC 62, chloroplastic</fullName>
    </recommendedName>
    <alternativeName>
        <fullName>Translocon at the inner envelope membrane of chloroplasts 62</fullName>
        <shortName>PsTIC62</shortName>
    </alternativeName>
</protein>
<feature type="transit peptide" description="Chloroplast" evidence="1">
    <location>
        <begin position="1"/>
        <end position="64"/>
    </location>
</feature>
<feature type="chain" id="PRO_5000067772" description="Protein TIC 62, chloroplastic">
    <location>
        <begin position="65"/>
        <end position="534"/>
    </location>
</feature>
<feature type="repeat" description="1">
    <location>
        <begin position="387"/>
        <end position="408"/>
    </location>
</feature>
<feature type="repeat" description="2">
    <location>
        <begin position="450"/>
        <end position="471"/>
    </location>
</feature>
<feature type="repeat" description="3">
    <location>
        <begin position="511"/>
        <end position="532"/>
    </location>
</feature>
<feature type="region of interest" description="Disordered" evidence="2">
    <location>
        <begin position="50"/>
        <end position="83"/>
    </location>
</feature>
<feature type="region of interest" description="Disordered" evidence="2">
    <location>
        <begin position="334"/>
        <end position="534"/>
    </location>
</feature>
<feature type="region of interest" description="3 X 22 AA approximate repeats">
    <location>
        <begin position="387"/>
        <end position="532"/>
    </location>
</feature>
<feature type="compositionally biased region" description="Polar residues" evidence="2">
    <location>
        <begin position="63"/>
        <end position="76"/>
    </location>
</feature>
<feature type="compositionally biased region" description="Polar residues" evidence="2">
    <location>
        <begin position="350"/>
        <end position="360"/>
    </location>
</feature>
<feature type="compositionally biased region" description="Low complexity" evidence="2">
    <location>
        <begin position="421"/>
        <end position="432"/>
    </location>
</feature>
<feature type="compositionally biased region" description="Pro residues" evidence="2">
    <location>
        <begin position="460"/>
        <end position="469"/>
    </location>
</feature>
<feature type="compositionally biased region" description="Basic and acidic residues" evidence="2">
    <location>
        <begin position="495"/>
        <end position="509"/>
    </location>
</feature>
<feature type="binding site">
    <location>
        <begin position="91"/>
        <end position="120"/>
    </location>
    <ligand>
        <name>NADP(+)</name>
        <dbReference type="ChEBI" id="CHEBI:58349"/>
    </ligand>
</feature>
<feature type="turn" evidence="8">
    <location>
        <begin position="390"/>
        <end position="393"/>
    </location>
</feature>
<accession>Q8SKU2</accession>
<name>TIC62_PEA</name>
<gene>
    <name type="primary">TIC62</name>
</gene>
<proteinExistence type="evidence at protein level"/>
<comment type="function">
    <text evidence="3 5">Involved in protein precursor import into chloroplasts. Part of the redox regulon consisting of TIC32, TIC 55 and TIC62. Has a NADPH-dependent dehydrogenase activity, but only after preincubation with lipids.</text>
</comment>
<comment type="subunit">
    <text evidence="3 4 5 6">Part of the Tic complex. Interacts with TIC40, TIC110 and TIC55. Interacts (via C-terminus) with PETH/FNR.</text>
</comment>
<comment type="interaction">
    <interactant intactId="EBI-15606082">
        <id>Q8SKU2</id>
    </interactant>
    <interactant intactId="EBI-931306">
        <id>P10933</id>
        <label>PETH</label>
    </interactant>
    <organismsDiffer>false</organismsDiffer>
    <experiments>5</experiments>
</comment>
<comment type="subcellular location">
    <subcellularLocation>
        <location evidence="3 5">Plastid</location>
        <location evidence="3 5">Chloroplast inner membrane</location>
        <topology evidence="7">Peripheral membrane protein</topology>
    </subcellularLocation>
    <subcellularLocation>
        <location>Plastid</location>
        <location>Chloroplast stroma</location>
    </subcellularLocation>
    <text evidence="5">Shuttles between the membranes and the stroma, depending on the redox state of the plastidic NADP(+)/NADPH pool.</text>
</comment>
<comment type="domain">
    <text>The C-terminus (346-534) is specific for the interaction with PETH/FNR.</text>
</comment>
<comment type="domain">
    <text>The central region (247-346) is sufficient for binding to the Tic complex.</text>
</comment>
<comment type="domain">
    <text>The N-terminus has a dehydrogenase activity in vitro.</text>
</comment>
<comment type="miscellaneous">
    <text>Dissociates from the Tic complex after addition of NADPH, while addition of NADP(+) reduces the interaction with PETH/FNR.</text>
</comment>
<sequence>MPMEVFSLTSTAIPSTLTRRDTAADKPSPHLNLSKYSHFMRYPLTTTLTNNRIRSSSSSSSSIRAQASGSTKSSTAEGIPEKTDSKDDNLVFVAGATGKVGSRTVRELIKLGFKVRAGVRNAQKAGALVQSVKQLKLDGASGGGEAVEKLEIVECDLEKADQIGSALGNASTVICAIGASEKEIFDITGPCRIDYRATKNLVDAATVAKVNHFILVTSLGTNKFGLPAAILNLFWGVLIWKRKAEEALLASGIPYTIVRPGGMERPTDAYKETHNVTLSTEDTLFGGQVSNLQVAELMAIMAKNPDLSYCKIVEVIAETTAPLTPAEKLLTRIPSQRPYIPSPKKVQKADTATVSNTGPSANVVAEVPSIAPQKETASKPVAKTEQPLSPYTAYDDLKPPSSPSPTKPSEKKQINISDAVPTPISSDTPSSIQEIDGISQTTSSSKGKESLSPYAAYPDLKPPSSPSPSVPTTSLSKRDTVVVSSNGPAQLSVEDTPKNEEQHLHEPKSRPLSPYAMYEDLKPPASPSPSFRKS</sequence>